<name>IF1_SALTI</name>
<protein>
    <recommendedName>
        <fullName evidence="2">Translation initiation factor IF-1</fullName>
    </recommendedName>
</protein>
<reference key="1">
    <citation type="journal article" date="2001" name="Nature">
        <title>Complete genome sequence of a multiple drug resistant Salmonella enterica serovar Typhi CT18.</title>
        <authorList>
            <person name="Parkhill J."/>
            <person name="Dougan G."/>
            <person name="James K.D."/>
            <person name="Thomson N.R."/>
            <person name="Pickard D."/>
            <person name="Wain J."/>
            <person name="Churcher C.M."/>
            <person name="Mungall K.L."/>
            <person name="Bentley S.D."/>
            <person name="Holden M.T.G."/>
            <person name="Sebaihia M."/>
            <person name="Baker S."/>
            <person name="Basham D."/>
            <person name="Brooks K."/>
            <person name="Chillingworth T."/>
            <person name="Connerton P."/>
            <person name="Cronin A."/>
            <person name="Davis P."/>
            <person name="Davies R.M."/>
            <person name="Dowd L."/>
            <person name="White N."/>
            <person name="Farrar J."/>
            <person name="Feltwell T."/>
            <person name="Hamlin N."/>
            <person name="Haque A."/>
            <person name="Hien T.T."/>
            <person name="Holroyd S."/>
            <person name="Jagels K."/>
            <person name="Krogh A."/>
            <person name="Larsen T.S."/>
            <person name="Leather S."/>
            <person name="Moule S."/>
            <person name="O'Gaora P."/>
            <person name="Parry C."/>
            <person name="Quail M.A."/>
            <person name="Rutherford K.M."/>
            <person name="Simmonds M."/>
            <person name="Skelton J."/>
            <person name="Stevens K."/>
            <person name="Whitehead S."/>
            <person name="Barrell B.G."/>
        </authorList>
    </citation>
    <scope>NUCLEOTIDE SEQUENCE [LARGE SCALE GENOMIC DNA]</scope>
    <source>
        <strain>CT18</strain>
    </source>
</reference>
<reference key="2">
    <citation type="journal article" date="2003" name="J. Bacteriol.">
        <title>Comparative genomics of Salmonella enterica serovar Typhi strains Ty2 and CT18.</title>
        <authorList>
            <person name="Deng W."/>
            <person name="Liou S.-R."/>
            <person name="Plunkett G. III"/>
            <person name="Mayhew G.F."/>
            <person name="Rose D.J."/>
            <person name="Burland V."/>
            <person name="Kodoyianni V."/>
            <person name="Schwartz D.C."/>
            <person name="Blattner F.R."/>
        </authorList>
    </citation>
    <scope>NUCLEOTIDE SEQUENCE [LARGE SCALE GENOMIC DNA]</scope>
    <source>
        <strain>ATCC 700931 / Ty2</strain>
    </source>
</reference>
<evidence type="ECO:0000250" key="1"/>
<evidence type="ECO:0000255" key="2">
    <source>
        <dbReference type="HAMAP-Rule" id="MF_00075"/>
    </source>
</evidence>
<feature type="initiator methionine" description="Removed" evidence="1">
    <location>
        <position position="1"/>
    </location>
</feature>
<feature type="chain" id="PRO_0000095859" description="Translation initiation factor IF-1">
    <location>
        <begin position="2"/>
        <end position="72"/>
    </location>
</feature>
<feature type="domain" description="S1-like" evidence="2">
    <location>
        <begin position="2"/>
        <end position="72"/>
    </location>
</feature>
<organism>
    <name type="scientific">Salmonella typhi</name>
    <dbReference type="NCBI Taxonomy" id="90370"/>
    <lineage>
        <taxon>Bacteria</taxon>
        <taxon>Pseudomonadati</taxon>
        <taxon>Pseudomonadota</taxon>
        <taxon>Gammaproteobacteria</taxon>
        <taxon>Enterobacterales</taxon>
        <taxon>Enterobacteriaceae</taxon>
        <taxon>Salmonella</taxon>
    </lineage>
</organism>
<accession>P69225</accession>
<accession>P02998</accession>
<comment type="function">
    <text evidence="2">One of the essential components for the initiation of protein synthesis. Stabilizes the binding of IF-2 and IF-3 on the 30S subunit to which N-formylmethionyl-tRNA(fMet) subsequently binds. Helps modulate mRNA selection, yielding the 30S pre-initiation complex (PIC). Upon addition of the 50S ribosomal subunit IF-1, IF-2 and IF-3 are released leaving the mature 70S translation initiation complex.</text>
</comment>
<comment type="subunit">
    <text evidence="2">Component of the 30S ribosomal translation pre-initiation complex which assembles on the 30S ribosome in the order IF-2 and IF-3, IF-1 and N-formylmethionyl-tRNA(fMet); mRNA recruitment can occur at any time during PIC assembly.</text>
</comment>
<comment type="subcellular location">
    <subcellularLocation>
        <location evidence="2">Cytoplasm</location>
    </subcellularLocation>
</comment>
<comment type="similarity">
    <text evidence="2">Belongs to the IF-1 family.</text>
</comment>
<sequence length="72" mass="8250">MAKEDNIEMQGTVLETLPNTMFRVELENGHVVTAHISGKMRKNYIRILTGDKVTVELTPYDLSKGRIVFRSR</sequence>
<dbReference type="EMBL" id="AL513382">
    <property type="protein sequence ID" value="CAD05354.1"/>
    <property type="molecule type" value="Genomic_DNA"/>
</dbReference>
<dbReference type="EMBL" id="AE014613">
    <property type="protein sequence ID" value="AAO69593.1"/>
    <property type="molecule type" value="Genomic_DNA"/>
</dbReference>
<dbReference type="RefSeq" id="NP_455442.1">
    <property type="nucleotide sequence ID" value="NC_003198.1"/>
</dbReference>
<dbReference type="RefSeq" id="WP_001040187.1">
    <property type="nucleotide sequence ID" value="NZ_WSUR01000019.1"/>
</dbReference>
<dbReference type="SMR" id="P69225"/>
<dbReference type="STRING" id="220341.gene:17584945"/>
<dbReference type="GeneID" id="93776536"/>
<dbReference type="KEGG" id="stt:t1980"/>
<dbReference type="KEGG" id="sty:STY0951"/>
<dbReference type="PATRIC" id="fig|220341.7.peg.959"/>
<dbReference type="eggNOG" id="COG0361">
    <property type="taxonomic scope" value="Bacteria"/>
</dbReference>
<dbReference type="HOGENOM" id="CLU_151267_1_0_6"/>
<dbReference type="OMA" id="EGHQCLC"/>
<dbReference type="OrthoDB" id="9803250at2"/>
<dbReference type="Proteomes" id="UP000000541">
    <property type="component" value="Chromosome"/>
</dbReference>
<dbReference type="Proteomes" id="UP000002670">
    <property type="component" value="Chromosome"/>
</dbReference>
<dbReference type="GO" id="GO:0005829">
    <property type="term" value="C:cytosol"/>
    <property type="evidence" value="ECO:0007669"/>
    <property type="project" value="TreeGrafter"/>
</dbReference>
<dbReference type="GO" id="GO:0043022">
    <property type="term" value="F:ribosome binding"/>
    <property type="evidence" value="ECO:0007669"/>
    <property type="project" value="UniProtKB-UniRule"/>
</dbReference>
<dbReference type="GO" id="GO:0019843">
    <property type="term" value="F:rRNA binding"/>
    <property type="evidence" value="ECO:0007669"/>
    <property type="project" value="UniProtKB-UniRule"/>
</dbReference>
<dbReference type="GO" id="GO:0003743">
    <property type="term" value="F:translation initiation factor activity"/>
    <property type="evidence" value="ECO:0007669"/>
    <property type="project" value="UniProtKB-UniRule"/>
</dbReference>
<dbReference type="CDD" id="cd04451">
    <property type="entry name" value="S1_IF1"/>
    <property type="match status" value="1"/>
</dbReference>
<dbReference type="FunFam" id="2.40.50.140:FF:000002">
    <property type="entry name" value="Translation initiation factor IF-1"/>
    <property type="match status" value="1"/>
</dbReference>
<dbReference type="Gene3D" id="2.40.50.140">
    <property type="entry name" value="Nucleic acid-binding proteins"/>
    <property type="match status" value="1"/>
</dbReference>
<dbReference type="HAMAP" id="MF_00075">
    <property type="entry name" value="IF_1"/>
    <property type="match status" value="1"/>
</dbReference>
<dbReference type="InterPro" id="IPR012340">
    <property type="entry name" value="NA-bd_OB-fold"/>
</dbReference>
<dbReference type="InterPro" id="IPR006196">
    <property type="entry name" value="RNA-binding_domain_S1_IF1"/>
</dbReference>
<dbReference type="InterPro" id="IPR003029">
    <property type="entry name" value="S1_domain"/>
</dbReference>
<dbReference type="InterPro" id="IPR004368">
    <property type="entry name" value="TIF_IF1"/>
</dbReference>
<dbReference type="NCBIfam" id="TIGR00008">
    <property type="entry name" value="infA"/>
    <property type="match status" value="1"/>
</dbReference>
<dbReference type="PANTHER" id="PTHR33370">
    <property type="entry name" value="TRANSLATION INITIATION FACTOR IF-1, CHLOROPLASTIC"/>
    <property type="match status" value="1"/>
</dbReference>
<dbReference type="PANTHER" id="PTHR33370:SF1">
    <property type="entry name" value="TRANSLATION INITIATION FACTOR IF-1, CHLOROPLASTIC"/>
    <property type="match status" value="1"/>
</dbReference>
<dbReference type="Pfam" id="PF01176">
    <property type="entry name" value="eIF-1a"/>
    <property type="match status" value="1"/>
</dbReference>
<dbReference type="SMART" id="SM00316">
    <property type="entry name" value="S1"/>
    <property type="match status" value="1"/>
</dbReference>
<dbReference type="SUPFAM" id="SSF50249">
    <property type="entry name" value="Nucleic acid-binding proteins"/>
    <property type="match status" value="1"/>
</dbReference>
<dbReference type="PROSITE" id="PS50832">
    <property type="entry name" value="S1_IF1_TYPE"/>
    <property type="match status" value="1"/>
</dbReference>
<proteinExistence type="inferred from homology"/>
<gene>
    <name evidence="2" type="primary">infA</name>
    <name type="ordered locus">STY0951</name>
    <name type="ordered locus">t1980</name>
</gene>
<keyword id="KW-0963">Cytoplasm</keyword>
<keyword id="KW-0396">Initiation factor</keyword>
<keyword id="KW-0648">Protein biosynthesis</keyword>
<keyword id="KW-0694">RNA-binding</keyword>
<keyword id="KW-0699">rRNA-binding</keyword>